<comment type="function">
    <text evidence="5">Required for checkpoint signaling after DNA damage. Required for ATR expression, possibly by stabilizing the protein.</text>
</comment>
<comment type="subunit">
    <text evidence="1 4 5 7 8">Interacts with ATR (By similarity). Heterodimer with ATR. The heterodimer binds the RPA complex and is then recruited to single-stranded DNA. Interacts with CEP164 (via N-terminus). Interacts with CINP.</text>
</comment>
<comment type="interaction">
    <interactant intactId="EBI-747353">
        <id>Q8WXE1</id>
    </interactant>
    <interactant intactId="EBI-968983">
        <id>Q13535</id>
        <label>ATR</label>
    </interactant>
    <organismsDiffer>false</organismsDiffer>
    <experiments>5</experiments>
</comment>
<comment type="interaction">
    <interactant intactId="EBI-747353">
        <id>Q8WXE1</id>
    </interactant>
    <interactant intactId="EBI-946029">
        <id>Q6P1W5</id>
        <label>C1orf94</label>
    </interactant>
    <organismsDiffer>false</organismsDiffer>
    <experiments>3</experiments>
</comment>
<comment type="interaction">
    <interactant intactId="EBI-747353">
        <id>Q8WXE1</id>
    </interactant>
    <interactant intactId="EBI-10299032">
        <id>Q9BUN5</id>
        <label>CCDC28B</label>
    </interactant>
    <organismsDiffer>false</organismsDiffer>
    <experiments>3</experiments>
</comment>
<comment type="interaction">
    <interactant intactId="EBI-747353">
        <id>Q8WXE1</id>
    </interactant>
    <interactant intactId="EBI-396137">
        <id>Q9UJX2</id>
        <label>CDC23</label>
    </interactant>
    <organismsDiffer>false</organismsDiffer>
    <experiments>3</experiments>
</comment>
<comment type="interaction">
    <interactant intactId="EBI-747353">
        <id>Q8WXE1</id>
    </interactant>
    <interactant intactId="EBI-1383449">
        <id>P50750</id>
        <label>CDK9</label>
    </interactant>
    <organismsDiffer>false</organismsDiffer>
    <experiments>3</experiments>
</comment>
<comment type="interaction">
    <interactant intactId="EBI-747353">
        <id>Q8WXE1</id>
    </interactant>
    <interactant intactId="EBI-739784">
        <id>Q9BW66</id>
        <label>CINP</label>
    </interactant>
    <organismsDiffer>false</organismsDiffer>
    <experiments>9</experiments>
</comment>
<comment type="interaction">
    <interactant intactId="EBI-747353">
        <id>Q8WXE1</id>
    </interactant>
    <interactant intactId="EBI-749727">
        <id>Q8NDB6</id>
        <label>FAM156A</label>
    </interactant>
    <organismsDiffer>false</organismsDiffer>
    <experiments>3</experiments>
</comment>
<comment type="interaction">
    <interactant intactId="EBI-747353">
        <id>Q8WXE1</id>
    </interactant>
    <interactant intactId="EBI-739832">
        <id>Q8TBB1</id>
        <label>LNX1</label>
    </interactant>
    <organismsDiffer>false</organismsDiffer>
    <experiments>3</experiments>
</comment>
<comment type="interaction">
    <interactant intactId="EBI-747353">
        <id>Q8WXE1</id>
    </interactant>
    <interactant intactId="EBI-8652459">
        <id>Q8WXB1</id>
        <label>METTL21A</label>
    </interactant>
    <organismsDiffer>false</organismsDiffer>
    <experiments>3</experiments>
</comment>
<comment type="interaction">
    <interactant intactId="EBI-747353">
        <id>Q8WXE1</id>
    </interactant>
    <interactant intactId="EBI-10172526">
        <id>Q9UJV3-2</id>
        <label>MID2</label>
    </interactant>
    <organismsDiffer>false</organismsDiffer>
    <experiments>3</experiments>
</comment>
<comment type="interaction">
    <interactant intactId="EBI-747353">
        <id>Q8WXE1</id>
    </interactant>
    <interactant intactId="EBI-1757866">
        <id>P00540</id>
        <label>MOS</label>
    </interactant>
    <organismsDiffer>false</organismsDiffer>
    <experiments>3</experiments>
</comment>
<comment type="interaction">
    <interactant intactId="EBI-747353">
        <id>Q8WXE1</id>
    </interactant>
    <interactant intactId="EBI-10200618">
        <id>P20592</id>
        <label>MX2</label>
    </interactant>
    <organismsDiffer>false</organismsDiffer>
    <experiments>3</experiments>
</comment>
<comment type="interaction">
    <interactant intactId="EBI-747353">
        <id>Q8WXE1</id>
    </interactant>
    <interactant intactId="EBI-10296950">
        <id>Q9BRL4</id>
        <label>PCTK1</label>
    </interactant>
    <organismsDiffer>false</organismsDiffer>
    <experiments>3</experiments>
</comment>
<comment type="interaction">
    <interactant intactId="EBI-747353">
        <id>Q8WXE1</id>
    </interactant>
    <interactant intactId="EBI-1055079">
        <id>O15160</id>
        <label>POLR1C</label>
    </interactant>
    <organismsDiffer>false</organismsDiffer>
    <experiments>3</experiments>
</comment>
<comment type="interaction">
    <interactant intactId="EBI-747353">
        <id>Q8WXE1</id>
    </interactant>
    <interactant intactId="EBI-947132">
        <id>P13521</id>
        <label>SCG2</label>
    </interactant>
    <organismsDiffer>false</organismsDiffer>
    <experiments>3</experiments>
</comment>
<comment type="interaction">
    <interactant intactId="EBI-747353">
        <id>Q8WXE1</id>
    </interactant>
    <interactant intactId="EBI-742487">
        <id>O43597</id>
        <label>SPRY2</label>
    </interactant>
    <organismsDiffer>false</organismsDiffer>
    <experiments>3</experiments>
</comment>
<comment type="interaction">
    <interactant intactId="EBI-747353">
        <id>Q8WXE1</id>
    </interactant>
    <interactant intactId="EBI-10172380">
        <id>Q5VWN6-2</id>
        <label>TASOR2</label>
    </interactant>
    <organismsDiffer>false</organismsDiffer>
    <experiments>3</experiments>
</comment>
<comment type="subcellular location">
    <subcellularLocation>
        <location evidence="4 7">Nucleus</location>
    </subcellularLocation>
    <text>Redistributes to discrete nuclear foci upon DNA damage.</text>
</comment>
<comment type="alternative products">
    <event type="alternative splicing"/>
    <isoform>
        <id>Q8WXE1-1</id>
        <name>1</name>
        <sequence type="displayed"/>
    </isoform>
    <isoform>
        <id>Q8WXE1-2</id>
        <name>2</name>
        <sequence type="described" ref="VSP_010504"/>
    </isoform>
    <isoform>
        <id>Q8WXE1-3</id>
        <name>3</name>
        <sequence type="described" ref="VSP_010501"/>
    </isoform>
    <isoform>
        <id>Q8WXE1-5</id>
        <name>4</name>
        <sequence type="described" ref="VSP_047011"/>
    </isoform>
</comment>
<comment type="tissue specificity">
    <text evidence="4">Ubiquitous.</text>
</comment>
<comment type="domain">
    <text evidence="6">The EEXXXDDL motif is required for the interaction with catalytic subunit PRKDC and its recruitment to sites of DNA damage.</text>
</comment>
<comment type="PTM">
    <text evidence="4">Phosphorylated by ATR.</text>
</comment>
<comment type="similarity">
    <text evidence="11">Belongs to the ATRIP family.</text>
</comment>
<comment type="caution">
    <text evidence="11">The gene for this protein is either identical to or adjacent to that of TREX1. Some of the mRNAs that encode ATRIP also encode TREX1 in another reading frame.</text>
</comment>
<comment type="sequence caution" evidence="11">
    <conflict type="erroneous initiation">
        <sequence resource="EMBL-CDS" id="BAB14029"/>
    </conflict>
    <text>Truncated N-terminus.</text>
</comment>
<comment type="sequence caution" evidence="11">
    <conflict type="frameshift">
        <sequence resource="EMBL-CDS" id="BAB14029"/>
    </conflict>
</comment>
<comment type="sequence caution" evidence="11">
    <conflict type="erroneous initiation">
        <sequence resource="EMBL-CDS" id="BAF84257"/>
    </conflict>
</comment>
<gene>
    <name type="primary">ATRIP</name>
    <name type="synonym">AGS1</name>
</gene>
<sequence length="791" mass="85838">MAGTSAPGSKRRSEPPAPRPGPPPGTGHPPSKRARGFSAAAAPDPDDPFGAHGDFTADDLEELDTLASQALSQCPAAARDVSSDHKVHRLLDGMSKNPSGKNRETVPIKDNFELEVLQAQYKELKEKMKVMEEEVLIKNGEIKILRDSLHQTESVLEEQRRSHFLLEQEKTQALSDKEKEFSKKLQSLQSELQFKDAEMNELRTKLQTSERANKLAAPSVSHVSPRKNPSVVIKPEACSPQFGKTSFPTKESFSANMSLPHPCQTESGYKPLVGREDSKPHSLRGDSIKQEEAQKSFVDSWRQRSNTQGSILINLLLKQPLIPGSSLSLCHLLSSSSESPAGTPLQPPGFGSTLAGMSGLRTTGSYDGSFSLSALREAQNLAFTGLNLVARNECSRDGDPAEGGRRAFPLCQLPGAVHFLPLVQFFIGLHCQALQDLAAAKRSGAPGDSPTHSSCVSSGVETNPEDSVCILEGFSVTALSILQHLVCHSGAVVSLLLSGVGADSAAGEGNRSLVHRLSDGDMTSALRGVADDQGQHPLLKMLLHLLAFSSAATGHLQASVLTQCLKVLVKLAENTSCDFLPRFQCVFQVLPKCLSPETPLPSVLLAVELLSLLADHDQLAPQLCSHSEGCLLLLLYMYITSRPDRVALETQWLQLEQEVVWLLAKLGVQSPLPPVTGSNCQCNVEVVRALTVMLHRQWLTVRRAGGPPRTDQQRRTVRCLRDTVLLLHGLSQKDKLFMMHCVEVLHQFDQVMPGVSMLIRGLPDVTDCEEAALDDLCAAETDVEDPEVECG</sequence>
<organism>
    <name type="scientific">Homo sapiens</name>
    <name type="common">Human</name>
    <dbReference type="NCBI Taxonomy" id="9606"/>
    <lineage>
        <taxon>Eukaryota</taxon>
        <taxon>Metazoa</taxon>
        <taxon>Chordata</taxon>
        <taxon>Craniata</taxon>
        <taxon>Vertebrata</taxon>
        <taxon>Euteleostomi</taxon>
        <taxon>Mammalia</taxon>
        <taxon>Eutheria</taxon>
        <taxon>Euarchontoglires</taxon>
        <taxon>Primates</taxon>
        <taxon>Haplorrhini</taxon>
        <taxon>Catarrhini</taxon>
        <taxon>Hominidae</taxon>
        <taxon>Homo</taxon>
    </lineage>
</organism>
<proteinExistence type="evidence at protein level"/>
<evidence type="ECO:0000250" key="1"/>
<evidence type="ECO:0000255" key="2"/>
<evidence type="ECO:0000256" key="3">
    <source>
        <dbReference type="SAM" id="MobiDB-lite"/>
    </source>
</evidence>
<evidence type="ECO:0000269" key="4">
    <source>
    </source>
</evidence>
<evidence type="ECO:0000269" key="5">
    <source>
    </source>
</evidence>
<evidence type="ECO:0000269" key="6">
    <source>
    </source>
</evidence>
<evidence type="ECO:0000269" key="7">
    <source>
    </source>
</evidence>
<evidence type="ECO:0000269" key="8">
    <source>
    </source>
</evidence>
<evidence type="ECO:0000303" key="9">
    <source>
    </source>
</evidence>
<evidence type="ECO:0000303" key="10">
    <source>
    </source>
</evidence>
<evidence type="ECO:0000305" key="11"/>
<evidence type="ECO:0007829" key="12">
    <source>
        <dbReference type="PDB" id="4NB3"/>
    </source>
</evidence>
<protein>
    <recommendedName>
        <fullName>ATR-interacting protein</fullName>
    </recommendedName>
    <alternativeName>
        <fullName>ATM and Rad3-related-interacting protein</fullName>
    </alternativeName>
</protein>
<keyword id="KW-0002">3D-structure</keyword>
<keyword id="KW-0025">Alternative splicing</keyword>
<keyword id="KW-0175">Coiled coil</keyword>
<keyword id="KW-0903">Direct protein sequencing</keyword>
<keyword id="KW-0227">DNA damage</keyword>
<keyword id="KW-0234">DNA repair</keyword>
<keyword id="KW-0539">Nucleus</keyword>
<keyword id="KW-0597">Phosphoprotein</keyword>
<keyword id="KW-1267">Proteomics identification</keyword>
<keyword id="KW-1185">Reference proteome</keyword>
<feature type="chain" id="PRO_0000064740" description="ATR-interacting protein">
    <location>
        <begin position="1"/>
        <end position="791"/>
    </location>
</feature>
<feature type="region of interest" description="Disordered" evidence="3">
    <location>
        <begin position="1"/>
        <end position="57"/>
    </location>
</feature>
<feature type="region of interest" description="Interaction with CINP" evidence="8">
    <location>
        <begin position="118"/>
        <end position="156"/>
    </location>
</feature>
<feature type="coiled-coil region" evidence="2">
    <location>
        <begin position="108"/>
        <end position="217"/>
    </location>
</feature>
<feature type="short sequence motif" description="EEXXXDL motif">
    <location>
        <begin position="769"/>
        <end position="776"/>
    </location>
</feature>
<feature type="compositionally biased region" description="Pro residues" evidence="3">
    <location>
        <begin position="15"/>
        <end position="27"/>
    </location>
</feature>
<feature type="compositionally biased region" description="Low complexity" evidence="3">
    <location>
        <begin position="36"/>
        <end position="54"/>
    </location>
</feature>
<feature type="splice variant" id="VSP_047011" description="In isoform 4." evidence="9">
    <location>
        <begin position="1"/>
        <end position="127"/>
    </location>
</feature>
<feature type="splice variant" id="VSP_010501" description="In isoform 3." evidence="10">
    <location>
        <begin position="1"/>
        <end position="93"/>
    </location>
</feature>
<feature type="splice variant" id="VSP_010504" description="In isoform 2." evidence="9 10">
    <location>
        <begin position="661"/>
        <end position="687"/>
    </location>
</feature>
<feature type="sequence variant" id="VAR_050683" description="In dbSNP:rs11925638.">
    <original>K</original>
    <variation>Q</variation>
    <location>
        <position position="125"/>
    </location>
</feature>
<feature type="sequence variant" id="VAR_050684" description="In dbSNP:rs35240314.">
    <original>P</original>
    <variation>L</variation>
    <location>
        <position position="240"/>
    </location>
</feature>
<feature type="mutagenesis site" description="Abolishes interaction with ATR and its recruitment to sites of DNA damage." evidence="6">
    <original>EE</original>
    <variation>AA</variation>
    <location>
        <begin position="769"/>
        <end position="770"/>
    </location>
</feature>
<feature type="mutagenesis site" description="Abolishes interaction with ATR and its recruitment to sites of DNA damage." evidence="6">
    <original>DD</original>
    <variation>AA</variation>
    <location>
        <begin position="774"/>
        <end position="775"/>
    </location>
</feature>
<feature type="sequence conflict" description="In Ref. 5; AAH14153." evidence="11" ref="5">
    <original>P</original>
    <variation>L</variation>
    <location>
        <position position="280"/>
    </location>
</feature>
<feature type="sequence conflict" description="In Ref. 2; BAF84257." evidence="11" ref="2">
    <original>T</original>
    <variation>A</variation>
    <location>
        <position position="343"/>
    </location>
</feature>
<feature type="sequence conflict" description="In Ref. 2; BAF84257." evidence="11" ref="2">
    <original>V</original>
    <variation>I</variation>
    <location>
        <position position="492"/>
    </location>
</feature>
<feature type="sequence conflict" description="In Ref. 2; BAG62254." evidence="11" ref="2">
    <original>A</original>
    <variation>T</variation>
    <location>
        <position position="647"/>
    </location>
</feature>
<feature type="sequence conflict" description="In Ref. 2; BAF84257." evidence="11" ref="2">
    <original>N</original>
    <variation>D</variation>
    <location>
        <position position="683"/>
    </location>
</feature>
<feature type="sequence conflict" description="In Ref. 5; AAH30597." evidence="11" ref="5">
    <original>V</original>
    <variation>I</variation>
    <location>
        <position position="687"/>
    </location>
</feature>
<feature type="sequence conflict" description="In Ref. 2; BAF84257." evidence="11" ref="2">
    <original>Q</original>
    <variation>K</variation>
    <location>
        <position position="712"/>
    </location>
</feature>
<feature type="sequence conflict" description="In Ref. 2; BAF84257." evidence="11" ref="2">
    <original>C</original>
    <variation>G</variation>
    <location>
        <position position="777"/>
    </location>
</feature>
<feature type="helix" evidence="12">
    <location>
        <begin position="57"/>
        <end position="63"/>
    </location>
</feature>
<reference key="1">
    <citation type="journal article" date="2001" name="Science">
        <title>ATR and ATRIP: partners in checkpoint signaling.</title>
        <authorList>
            <person name="Cortez D."/>
            <person name="Guntuku S."/>
            <person name="Qin J."/>
            <person name="Elledge S.J."/>
        </authorList>
    </citation>
    <scope>NUCLEOTIDE SEQUENCE [MRNA] (ISOFORM 1)</scope>
    <scope>PROTEIN SEQUENCE OF 147-160 AND 722-733</scope>
    <scope>IDENTIFICATION BY MASS SPECTROMETRY</scope>
    <scope>ALTERNATIVE SPLICING</scope>
    <scope>PHOSPHORYLATION</scope>
    <scope>INTERACTION WITH ATR</scope>
    <scope>SUBCELLULAR LOCATION</scope>
    <scope>TISSUE SPECIFICITY</scope>
</reference>
<reference key="2">
    <citation type="journal article" date="2004" name="Nat. Genet.">
        <title>Complete sequencing and characterization of 21,243 full-length human cDNAs.</title>
        <authorList>
            <person name="Ota T."/>
            <person name="Suzuki Y."/>
            <person name="Nishikawa T."/>
            <person name="Otsuki T."/>
            <person name="Sugiyama T."/>
            <person name="Irie R."/>
            <person name="Wakamatsu A."/>
            <person name="Hayashi K."/>
            <person name="Sato H."/>
            <person name="Nagai K."/>
            <person name="Kimura K."/>
            <person name="Makita H."/>
            <person name="Sekine M."/>
            <person name="Obayashi M."/>
            <person name="Nishi T."/>
            <person name="Shibahara T."/>
            <person name="Tanaka T."/>
            <person name="Ishii S."/>
            <person name="Yamamoto J."/>
            <person name="Saito K."/>
            <person name="Kawai Y."/>
            <person name="Isono Y."/>
            <person name="Nakamura Y."/>
            <person name="Nagahari K."/>
            <person name="Murakami K."/>
            <person name="Yasuda T."/>
            <person name="Iwayanagi T."/>
            <person name="Wagatsuma M."/>
            <person name="Shiratori A."/>
            <person name="Sudo H."/>
            <person name="Hosoiri T."/>
            <person name="Kaku Y."/>
            <person name="Kodaira H."/>
            <person name="Kondo H."/>
            <person name="Sugawara M."/>
            <person name="Takahashi M."/>
            <person name="Kanda K."/>
            <person name="Yokoi T."/>
            <person name="Furuya T."/>
            <person name="Kikkawa E."/>
            <person name="Omura Y."/>
            <person name="Abe K."/>
            <person name="Kamihara K."/>
            <person name="Katsuta N."/>
            <person name="Sato K."/>
            <person name="Tanikawa M."/>
            <person name="Yamazaki M."/>
            <person name="Ninomiya K."/>
            <person name="Ishibashi T."/>
            <person name="Yamashita H."/>
            <person name="Murakawa K."/>
            <person name="Fujimori K."/>
            <person name="Tanai H."/>
            <person name="Kimata M."/>
            <person name="Watanabe M."/>
            <person name="Hiraoka S."/>
            <person name="Chiba Y."/>
            <person name="Ishida S."/>
            <person name="Ono Y."/>
            <person name="Takiguchi S."/>
            <person name="Watanabe S."/>
            <person name="Yosida M."/>
            <person name="Hotuta T."/>
            <person name="Kusano J."/>
            <person name="Kanehori K."/>
            <person name="Takahashi-Fujii A."/>
            <person name="Hara H."/>
            <person name="Tanase T.-O."/>
            <person name="Nomura Y."/>
            <person name="Togiya S."/>
            <person name="Komai F."/>
            <person name="Hara R."/>
            <person name="Takeuchi K."/>
            <person name="Arita M."/>
            <person name="Imose N."/>
            <person name="Musashino K."/>
            <person name="Yuuki H."/>
            <person name="Oshima A."/>
            <person name="Sasaki N."/>
            <person name="Aotsuka S."/>
            <person name="Yoshikawa Y."/>
            <person name="Matsunawa H."/>
            <person name="Ichihara T."/>
            <person name="Shiohata N."/>
            <person name="Sano S."/>
            <person name="Moriya S."/>
            <person name="Momiyama H."/>
            <person name="Satoh N."/>
            <person name="Takami S."/>
            <person name="Terashima Y."/>
            <person name="Suzuki O."/>
            <person name="Nakagawa S."/>
            <person name="Senoh A."/>
            <person name="Mizoguchi H."/>
            <person name="Goto Y."/>
            <person name="Shimizu F."/>
            <person name="Wakebe H."/>
            <person name="Hishigaki H."/>
            <person name="Watanabe T."/>
            <person name="Sugiyama A."/>
            <person name="Takemoto M."/>
            <person name="Kawakami B."/>
            <person name="Yamazaki M."/>
            <person name="Watanabe K."/>
            <person name="Kumagai A."/>
            <person name="Itakura S."/>
            <person name="Fukuzumi Y."/>
            <person name="Fujimori Y."/>
            <person name="Komiyama M."/>
            <person name="Tashiro H."/>
            <person name="Tanigami A."/>
            <person name="Fujiwara T."/>
            <person name="Ono T."/>
            <person name="Yamada K."/>
            <person name="Fujii Y."/>
            <person name="Ozaki K."/>
            <person name="Hirao M."/>
            <person name="Ohmori Y."/>
            <person name="Kawabata A."/>
            <person name="Hikiji T."/>
            <person name="Kobatake N."/>
            <person name="Inagaki H."/>
            <person name="Ikema Y."/>
            <person name="Okamoto S."/>
            <person name="Okitani R."/>
            <person name="Kawakami T."/>
            <person name="Noguchi S."/>
            <person name="Itoh T."/>
            <person name="Shigeta K."/>
            <person name="Senba T."/>
            <person name="Matsumura K."/>
            <person name="Nakajima Y."/>
            <person name="Mizuno T."/>
            <person name="Morinaga M."/>
            <person name="Sasaki M."/>
            <person name="Togashi T."/>
            <person name="Oyama M."/>
            <person name="Hata H."/>
            <person name="Watanabe M."/>
            <person name="Komatsu T."/>
            <person name="Mizushima-Sugano J."/>
            <person name="Satoh T."/>
            <person name="Shirai Y."/>
            <person name="Takahashi Y."/>
            <person name="Nakagawa K."/>
            <person name="Okumura K."/>
            <person name="Nagase T."/>
            <person name="Nomura N."/>
            <person name="Kikuchi H."/>
            <person name="Masuho Y."/>
            <person name="Yamashita R."/>
            <person name="Nakai K."/>
            <person name="Yada T."/>
            <person name="Nakamura Y."/>
            <person name="Ohara O."/>
            <person name="Isogai T."/>
            <person name="Sugano S."/>
        </authorList>
    </citation>
    <scope>NUCLEOTIDE SEQUENCE [LARGE SCALE MRNA] (ISOFORMS 1; 2 AND 4)</scope>
    <source>
        <tissue>Endothelial cell</tissue>
        <tissue>Fetal brain</tissue>
        <tissue>Placenta</tissue>
        <tissue>Prostate</tissue>
    </source>
</reference>
<reference key="3">
    <citation type="journal article" date="2006" name="Nature">
        <title>The DNA sequence, annotation and analysis of human chromosome 3.</title>
        <authorList>
            <person name="Muzny D.M."/>
            <person name="Scherer S.E."/>
            <person name="Kaul R."/>
            <person name="Wang J."/>
            <person name="Yu J."/>
            <person name="Sudbrak R."/>
            <person name="Buhay C.J."/>
            <person name="Chen R."/>
            <person name="Cree A."/>
            <person name="Ding Y."/>
            <person name="Dugan-Rocha S."/>
            <person name="Gill R."/>
            <person name="Gunaratne P."/>
            <person name="Harris R.A."/>
            <person name="Hawes A.C."/>
            <person name="Hernandez J."/>
            <person name="Hodgson A.V."/>
            <person name="Hume J."/>
            <person name="Jackson A."/>
            <person name="Khan Z.M."/>
            <person name="Kovar-Smith C."/>
            <person name="Lewis L.R."/>
            <person name="Lozado R.J."/>
            <person name="Metzker M.L."/>
            <person name="Milosavljevic A."/>
            <person name="Miner G.R."/>
            <person name="Morgan M.B."/>
            <person name="Nazareth L.V."/>
            <person name="Scott G."/>
            <person name="Sodergren E."/>
            <person name="Song X.-Z."/>
            <person name="Steffen D."/>
            <person name="Wei S."/>
            <person name="Wheeler D.A."/>
            <person name="Wright M.W."/>
            <person name="Worley K.C."/>
            <person name="Yuan Y."/>
            <person name="Zhang Z."/>
            <person name="Adams C.Q."/>
            <person name="Ansari-Lari M.A."/>
            <person name="Ayele M."/>
            <person name="Brown M.J."/>
            <person name="Chen G."/>
            <person name="Chen Z."/>
            <person name="Clendenning J."/>
            <person name="Clerc-Blankenburg K.P."/>
            <person name="Chen R."/>
            <person name="Chen Z."/>
            <person name="Davis C."/>
            <person name="Delgado O."/>
            <person name="Dinh H.H."/>
            <person name="Dong W."/>
            <person name="Draper H."/>
            <person name="Ernst S."/>
            <person name="Fu G."/>
            <person name="Gonzalez-Garay M.L."/>
            <person name="Garcia D.K."/>
            <person name="Gillett W."/>
            <person name="Gu J."/>
            <person name="Hao B."/>
            <person name="Haugen E."/>
            <person name="Havlak P."/>
            <person name="He X."/>
            <person name="Hennig S."/>
            <person name="Hu S."/>
            <person name="Huang W."/>
            <person name="Jackson L.R."/>
            <person name="Jacob L.S."/>
            <person name="Kelly S.H."/>
            <person name="Kube M."/>
            <person name="Levy R."/>
            <person name="Li Z."/>
            <person name="Liu B."/>
            <person name="Liu J."/>
            <person name="Liu W."/>
            <person name="Lu J."/>
            <person name="Maheshwari M."/>
            <person name="Nguyen B.-V."/>
            <person name="Okwuonu G.O."/>
            <person name="Palmeiri A."/>
            <person name="Pasternak S."/>
            <person name="Perez L.M."/>
            <person name="Phelps K.A."/>
            <person name="Plopper F.J."/>
            <person name="Qiang B."/>
            <person name="Raymond C."/>
            <person name="Rodriguez R."/>
            <person name="Saenphimmachak C."/>
            <person name="Santibanez J."/>
            <person name="Shen H."/>
            <person name="Shen Y."/>
            <person name="Subramanian S."/>
            <person name="Tabor P.E."/>
            <person name="Verduzco D."/>
            <person name="Waldron L."/>
            <person name="Wang J."/>
            <person name="Wang J."/>
            <person name="Wang Q."/>
            <person name="Williams G.A."/>
            <person name="Wong G.K.-S."/>
            <person name="Yao Z."/>
            <person name="Zhang J."/>
            <person name="Zhang X."/>
            <person name="Zhao G."/>
            <person name="Zhou J."/>
            <person name="Zhou Y."/>
            <person name="Nelson D."/>
            <person name="Lehrach H."/>
            <person name="Reinhardt R."/>
            <person name="Naylor S.L."/>
            <person name="Yang H."/>
            <person name="Olson M."/>
            <person name="Weinstock G."/>
            <person name="Gibbs R.A."/>
        </authorList>
    </citation>
    <scope>NUCLEOTIDE SEQUENCE [LARGE SCALE GENOMIC DNA]</scope>
</reference>
<reference key="4">
    <citation type="submission" date="2005-07" db="EMBL/GenBank/DDBJ databases">
        <authorList>
            <person name="Mural R.J."/>
            <person name="Istrail S."/>
            <person name="Sutton G.G."/>
            <person name="Florea L."/>
            <person name="Halpern A.L."/>
            <person name="Mobarry C.M."/>
            <person name="Lippert R."/>
            <person name="Walenz B."/>
            <person name="Shatkay H."/>
            <person name="Dew I."/>
            <person name="Miller J.R."/>
            <person name="Flanigan M.J."/>
            <person name="Edwards N.J."/>
            <person name="Bolanos R."/>
            <person name="Fasulo D."/>
            <person name="Halldorsson B.V."/>
            <person name="Hannenhalli S."/>
            <person name="Turner R."/>
            <person name="Yooseph S."/>
            <person name="Lu F."/>
            <person name="Nusskern D.R."/>
            <person name="Shue B.C."/>
            <person name="Zheng X.H."/>
            <person name="Zhong F."/>
            <person name="Delcher A.L."/>
            <person name="Huson D.H."/>
            <person name="Kravitz S.A."/>
            <person name="Mouchard L."/>
            <person name="Reinert K."/>
            <person name="Remington K.A."/>
            <person name="Clark A.G."/>
            <person name="Waterman M.S."/>
            <person name="Eichler E.E."/>
            <person name="Adams M.D."/>
            <person name="Hunkapiller M.W."/>
            <person name="Myers E.W."/>
            <person name="Venter J.C."/>
        </authorList>
    </citation>
    <scope>NUCLEOTIDE SEQUENCE [LARGE SCALE GENOMIC DNA]</scope>
</reference>
<reference key="5">
    <citation type="journal article" date="2004" name="Genome Res.">
        <title>The status, quality, and expansion of the NIH full-length cDNA project: the Mammalian Gene Collection (MGC).</title>
        <authorList>
            <consortium name="The MGC Project Team"/>
        </authorList>
    </citation>
    <scope>NUCLEOTIDE SEQUENCE [LARGE SCALE MRNA] (ISOFORMS 2 AND 3)</scope>
    <source>
        <tissue>Colon</tissue>
        <tissue>Lymph</tissue>
        <tissue>Testis</tissue>
    </source>
</reference>
<reference key="6">
    <citation type="journal article" date="2007" name="BMC Genomics">
        <title>The full-ORF clone resource of the German cDNA consortium.</title>
        <authorList>
            <person name="Bechtel S."/>
            <person name="Rosenfelder H."/>
            <person name="Duda A."/>
            <person name="Schmidt C.P."/>
            <person name="Ernst U."/>
            <person name="Wellenreuther R."/>
            <person name="Mehrle A."/>
            <person name="Schuster C."/>
            <person name="Bahr A."/>
            <person name="Bloecker H."/>
            <person name="Heubner D."/>
            <person name="Hoerlein A."/>
            <person name="Michel G."/>
            <person name="Wedler H."/>
            <person name="Koehrer K."/>
            <person name="Ottenwaelder B."/>
            <person name="Poustka A."/>
            <person name="Wiemann S."/>
            <person name="Schupp I."/>
        </authorList>
    </citation>
    <scope>NUCLEOTIDE SEQUENCE [LARGE SCALE MRNA] OF 134-791 (ISOFORM 1)</scope>
    <source>
        <tissue>Melanoma</tissue>
    </source>
</reference>
<reference key="7">
    <citation type="journal article" date="2003" name="Science">
        <title>Sensing DNA damage through ATRIP recognition of RPA-ssDNA complexes.</title>
        <authorList>
            <person name="Zou L."/>
            <person name="Elledge S.J."/>
        </authorList>
    </citation>
    <scope>FUNCTION</scope>
    <scope>INTERACTION WITH THE RPA COMPLEX</scope>
</reference>
<reference key="8">
    <citation type="journal article" date="2005" name="Nature">
        <title>Conserved modes of recruitment of ATM, ATR and DNA-PKcs to sites of DNA damage.</title>
        <authorList>
            <person name="Falck J."/>
            <person name="Coates J."/>
            <person name="Jackson S.P."/>
        </authorList>
    </citation>
    <scope>DOMAIN</scope>
    <scope>MUTAGENESIS OF 769-GLU-GLU-770 AND 774-ASP-ASP-775</scope>
</reference>
<reference key="9">
    <citation type="journal article" date="2008" name="Genes Dev.">
        <title>Cep164 is a mediator protein required for the maintenance of genomic stability through modulation of MDC1, RPA, and CHK1.</title>
        <authorList>
            <person name="Sivasubramaniam S."/>
            <person name="Sun X."/>
            <person name="Pan Y.R."/>
            <person name="Wang S."/>
            <person name="Lee E.Y."/>
        </authorList>
    </citation>
    <scope>INTERACTION WITH CEP164</scope>
    <scope>SUBCELLULAR LOCATION</scope>
</reference>
<reference key="10">
    <citation type="journal article" date="2009" name="Proc. Natl. Acad. Sci. U.S.A.">
        <title>Functional genomic screens identify CINP as a genome maintenance protein.</title>
        <authorList>
            <person name="Lovejoy C.A."/>
            <person name="Xu X."/>
            <person name="Bansbach C.E."/>
            <person name="Glick G.G."/>
            <person name="Zhao R."/>
            <person name="Ye F."/>
            <person name="Sirbu B.M."/>
            <person name="Titus L.C."/>
            <person name="Shyr Y."/>
            <person name="Cortez D."/>
        </authorList>
    </citation>
    <scope>INTERACTION WITH CINP</scope>
</reference>
<name>ATRIP_HUMAN</name>
<dbReference type="EMBL" id="AF451323">
    <property type="protein sequence ID" value="AAL38042.1"/>
    <property type="molecule type" value="mRNA"/>
</dbReference>
<dbReference type="EMBL" id="AK022405">
    <property type="protein sequence ID" value="BAB14029.1"/>
    <property type="status" value="ALT_SEQ"/>
    <property type="molecule type" value="mRNA"/>
</dbReference>
<dbReference type="EMBL" id="AK291568">
    <property type="protein sequence ID" value="BAF84257.1"/>
    <property type="status" value="ALT_INIT"/>
    <property type="molecule type" value="mRNA"/>
</dbReference>
<dbReference type="EMBL" id="AK291829">
    <property type="protein sequence ID" value="BAF84518.1"/>
    <property type="molecule type" value="mRNA"/>
</dbReference>
<dbReference type="EMBL" id="AK315075">
    <property type="protein sequence ID" value="BAG37544.1"/>
    <property type="molecule type" value="mRNA"/>
</dbReference>
<dbReference type="EMBL" id="AK300548">
    <property type="protein sequence ID" value="BAG62254.1"/>
    <property type="molecule type" value="mRNA"/>
</dbReference>
<dbReference type="EMBL" id="AC104448">
    <property type="status" value="NOT_ANNOTATED_CDS"/>
    <property type="molecule type" value="Genomic_DNA"/>
</dbReference>
<dbReference type="EMBL" id="CH471055">
    <property type="protein sequence ID" value="EAW64876.1"/>
    <property type="molecule type" value="Genomic_DNA"/>
</dbReference>
<dbReference type="EMBL" id="CH471055">
    <property type="protein sequence ID" value="EAW64878.1"/>
    <property type="molecule type" value="Genomic_DNA"/>
</dbReference>
<dbReference type="EMBL" id="BC014153">
    <property type="protein sequence ID" value="AAH14153.2"/>
    <property type="molecule type" value="mRNA"/>
</dbReference>
<dbReference type="EMBL" id="BC020563">
    <property type="protein sequence ID" value="AAH20563.1"/>
    <property type="molecule type" value="mRNA"/>
</dbReference>
<dbReference type="EMBL" id="BC030597">
    <property type="protein sequence ID" value="AAH30597.1"/>
    <property type="molecule type" value="mRNA"/>
</dbReference>
<dbReference type="EMBL" id="AL832917">
    <property type="protein sequence ID" value="CAH10621.1"/>
    <property type="molecule type" value="mRNA"/>
</dbReference>
<dbReference type="CCDS" id="CCDS2767.1">
    <molecule id="Q8WXE1-2"/>
</dbReference>
<dbReference type="CCDS" id="CCDS2768.1">
    <molecule id="Q8WXE1-1"/>
</dbReference>
<dbReference type="CCDS" id="CCDS59449.1">
    <molecule id="Q8WXE1-3"/>
</dbReference>
<dbReference type="RefSeq" id="NP_001257951.1">
    <molecule id="Q8WXE1-5"/>
    <property type="nucleotide sequence ID" value="NM_001271022.2"/>
</dbReference>
<dbReference type="RefSeq" id="NP_001257952.1">
    <molecule id="Q8WXE1-3"/>
    <property type="nucleotide sequence ID" value="NM_001271023.2"/>
</dbReference>
<dbReference type="RefSeq" id="NP_115542.2">
    <molecule id="Q8WXE1-2"/>
    <property type="nucleotide sequence ID" value="NM_032166.3"/>
</dbReference>
<dbReference type="RefSeq" id="NP_569055.1">
    <molecule id="Q8WXE1-1"/>
    <property type="nucleotide sequence ID" value="NM_130384.3"/>
</dbReference>
<dbReference type="PDB" id="4IGK">
    <property type="method" value="X-ray"/>
    <property type="resolution" value="1.75 A"/>
    <property type="chains" value="C/D=237-243"/>
</dbReference>
<dbReference type="PDB" id="4NB3">
    <property type="method" value="X-ray"/>
    <property type="resolution" value="1.35 A"/>
    <property type="chains" value="C/D=54-67"/>
</dbReference>
<dbReference type="PDB" id="5YZ0">
    <property type="method" value="EM"/>
    <property type="resolution" value="4.70 A"/>
    <property type="chains" value="C/D=1-791"/>
</dbReference>
<dbReference type="PDB" id="7XV4">
    <property type="method" value="X-ray"/>
    <property type="resolution" value="1.60 A"/>
    <property type="chains" value="B=53-69"/>
</dbReference>
<dbReference type="PDBsum" id="4IGK"/>
<dbReference type="PDBsum" id="4NB3"/>
<dbReference type="PDBsum" id="5YZ0"/>
<dbReference type="PDBsum" id="7XV4"/>
<dbReference type="EMDB" id="EMD-6862"/>
<dbReference type="SMR" id="Q8WXE1"/>
<dbReference type="BioGRID" id="313463">
    <property type="interactions" value="103"/>
</dbReference>
<dbReference type="ComplexPortal" id="CPX-3622">
    <property type="entry name" value="ATR-ATRIP DNA damage-sensing kinase complex"/>
</dbReference>
<dbReference type="CORUM" id="Q8WXE1"/>
<dbReference type="DIP" id="DIP-46495N"/>
<dbReference type="ELM" id="Q8WXE1"/>
<dbReference type="FunCoup" id="Q8WXE1">
    <property type="interactions" value="2618"/>
</dbReference>
<dbReference type="IntAct" id="Q8WXE1">
    <property type="interactions" value="61"/>
</dbReference>
<dbReference type="MINT" id="Q8WXE1"/>
<dbReference type="STRING" id="9606.ENSP00000323099"/>
<dbReference type="BindingDB" id="Q8WXE1"/>
<dbReference type="ChEMBL" id="CHEMBL4106138"/>
<dbReference type="GlyGen" id="Q8WXE1">
    <property type="glycosylation" value="5 sites, 1 O-linked glycan (5 sites)"/>
</dbReference>
<dbReference type="iPTMnet" id="Q8WXE1"/>
<dbReference type="PhosphoSitePlus" id="Q8WXE1"/>
<dbReference type="BioMuta" id="ATRIP"/>
<dbReference type="DMDM" id="48428109"/>
<dbReference type="CPTAC" id="CPTAC-3216"/>
<dbReference type="CPTAC" id="CPTAC-3217"/>
<dbReference type="CPTAC" id="CPTAC-914"/>
<dbReference type="CPTAC" id="CPTAC-915"/>
<dbReference type="jPOST" id="Q8WXE1"/>
<dbReference type="MassIVE" id="Q8WXE1"/>
<dbReference type="PaxDb" id="9606-ENSP00000323099"/>
<dbReference type="PeptideAtlas" id="Q8WXE1"/>
<dbReference type="ProteomicsDB" id="6227"/>
<dbReference type="ProteomicsDB" id="75018">
    <molecule id="Q8WXE1-1"/>
</dbReference>
<dbReference type="ProteomicsDB" id="75019">
    <molecule id="Q8WXE1-2"/>
</dbReference>
<dbReference type="ProteomicsDB" id="75020">
    <molecule id="Q8WXE1-3"/>
</dbReference>
<dbReference type="Pumba" id="Q8WXE1"/>
<dbReference type="Antibodypedia" id="30090">
    <property type="antibodies" value="600 antibodies from 37 providers"/>
</dbReference>
<dbReference type="CPTC" id="Q8WXE1">
    <property type="antibodies" value="1 antibody"/>
</dbReference>
<dbReference type="DNASU" id="84126"/>
<dbReference type="Ensembl" id="ENST00000320211.10">
    <molecule id="Q8WXE1-1"/>
    <property type="protein sequence ID" value="ENSP00000323099.3"/>
    <property type="gene ID" value="ENSG00000164053.22"/>
</dbReference>
<dbReference type="Ensembl" id="ENST00000346691.9">
    <molecule id="Q8WXE1-2"/>
    <property type="protein sequence ID" value="ENSP00000302338.5"/>
    <property type="gene ID" value="ENSG00000164053.22"/>
</dbReference>
<dbReference type="Ensembl" id="ENST00000412052.4">
    <molecule id="Q8WXE1-3"/>
    <property type="protein sequence ID" value="ENSP00000400930.1"/>
    <property type="gene ID" value="ENSG00000164053.22"/>
</dbReference>
<dbReference type="GeneID" id="84126"/>
<dbReference type="KEGG" id="hsa:84126"/>
<dbReference type="MANE-Select" id="ENST00000320211.10">
    <property type="protein sequence ID" value="ENSP00000323099.3"/>
    <property type="RefSeq nucleotide sequence ID" value="NM_130384.3"/>
    <property type="RefSeq protein sequence ID" value="NP_569055.1"/>
</dbReference>
<dbReference type="UCSC" id="uc003ctf.3">
    <molecule id="Q8WXE1-1"/>
    <property type="organism name" value="human"/>
</dbReference>
<dbReference type="AGR" id="HGNC:33499"/>
<dbReference type="CTD" id="84126"/>
<dbReference type="DisGeNET" id="84126"/>
<dbReference type="GeneCards" id="ATRIP"/>
<dbReference type="HGNC" id="HGNC:33499">
    <property type="gene designation" value="ATRIP"/>
</dbReference>
<dbReference type="HPA" id="ENSG00000164053">
    <property type="expression patterns" value="Tissue enhanced (testis)"/>
</dbReference>
<dbReference type="MalaCards" id="ATRIP"/>
<dbReference type="MIM" id="606605">
    <property type="type" value="gene"/>
</dbReference>
<dbReference type="neXtProt" id="NX_Q8WXE1"/>
<dbReference type="OpenTargets" id="ENSG00000164053"/>
<dbReference type="Orphanet" id="808">
    <property type="disease" value="Seckel syndrome"/>
</dbReference>
<dbReference type="PharmGKB" id="PA162377290"/>
<dbReference type="VEuPathDB" id="HostDB:ENSG00000164053"/>
<dbReference type="eggNOG" id="ENOG502QQF4">
    <property type="taxonomic scope" value="Eukaryota"/>
</dbReference>
<dbReference type="GeneTree" id="ENSGT00390000012850"/>
<dbReference type="HOGENOM" id="CLU_024109_0_0_1"/>
<dbReference type="InParanoid" id="Q8WXE1"/>
<dbReference type="OMA" id="CALAQHH"/>
<dbReference type="OrthoDB" id="6428926at2759"/>
<dbReference type="PAN-GO" id="Q8WXE1">
    <property type="GO annotations" value="1 GO annotation based on evolutionary models"/>
</dbReference>
<dbReference type="PhylomeDB" id="Q8WXE1"/>
<dbReference type="TreeFam" id="TF324417"/>
<dbReference type="PathwayCommons" id="Q8WXE1"/>
<dbReference type="Reactome" id="R-HSA-176187">
    <property type="pathway name" value="Activation of ATR in response to replication stress"/>
</dbReference>
<dbReference type="Reactome" id="R-HSA-5685938">
    <property type="pathway name" value="HDR through Single Strand Annealing (SSA)"/>
</dbReference>
<dbReference type="Reactome" id="R-HSA-5693607">
    <property type="pathway name" value="Processing of DNA double-strand break ends"/>
</dbReference>
<dbReference type="Reactome" id="R-HSA-5693616">
    <property type="pathway name" value="Presynaptic phase of homologous DNA pairing and strand exchange"/>
</dbReference>
<dbReference type="Reactome" id="R-HSA-6783310">
    <property type="pathway name" value="Fanconi Anemia Pathway"/>
</dbReference>
<dbReference type="Reactome" id="R-HSA-6804756">
    <property type="pathway name" value="Regulation of TP53 Activity through Phosphorylation"/>
</dbReference>
<dbReference type="Reactome" id="R-HSA-69473">
    <property type="pathway name" value="G2/M DNA damage checkpoint"/>
</dbReference>
<dbReference type="Reactome" id="R-HSA-9709570">
    <property type="pathway name" value="Impaired BRCA2 binding to RAD51"/>
</dbReference>
<dbReference type="SignaLink" id="Q8WXE1"/>
<dbReference type="SIGNOR" id="Q8WXE1"/>
<dbReference type="BioGRID-ORCS" id="84126">
    <property type="hits" value="543 hits in 1162 CRISPR screens"/>
</dbReference>
<dbReference type="CD-CODE" id="91857CE7">
    <property type="entry name" value="Nucleolus"/>
</dbReference>
<dbReference type="ChiTaRS" id="ATRIP">
    <property type="organism name" value="human"/>
</dbReference>
<dbReference type="EvolutionaryTrace" id="Q8WXE1"/>
<dbReference type="GenomeRNAi" id="84126"/>
<dbReference type="Pharos" id="Q8WXE1">
    <property type="development level" value="Tbio"/>
</dbReference>
<dbReference type="PRO" id="PR:Q8WXE1"/>
<dbReference type="Proteomes" id="UP000005640">
    <property type="component" value="Chromosome 3"/>
</dbReference>
<dbReference type="RNAct" id="Q8WXE1">
    <property type="molecule type" value="protein"/>
</dbReference>
<dbReference type="Bgee" id="ENSG00000164053">
    <property type="expression patterns" value="Expressed in left testis and 108 other cell types or tissues"/>
</dbReference>
<dbReference type="ExpressionAtlas" id="Q8WXE1">
    <property type="expression patterns" value="baseline and differential"/>
</dbReference>
<dbReference type="GO" id="GO:0070310">
    <property type="term" value="C:ATR-ATRIP complex"/>
    <property type="evidence" value="ECO:0000353"/>
    <property type="project" value="ComplexPortal"/>
</dbReference>
<dbReference type="GO" id="GO:0005654">
    <property type="term" value="C:nucleoplasm"/>
    <property type="evidence" value="ECO:0000314"/>
    <property type="project" value="HPA"/>
</dbReference>
<dbReference type="GO" id="GO:0005634">
    <property type="term" value="C:nucleus"/>
    <property type="evidence" value="ECO:0000303"/>
    <property type="project" value="ComplexPortal"/>
</dbReference>
<dbReference type="GO" id="GO:0070530">
    <property type="term" value="F:K63-linked polyubiquitin modification-dependent protein binding"/>
    <property type="evidence" value="ECO:0000314"/>
    <property type="project" value="UniProtKB"/>
</dbReference>
<dbReference type="GO" id="GO:0000077">
    <property type="term" value="P:DNA damage checkpoint signaling"/>
    <property type="evidence" value="ECO:0000304"/>
    <property type="project" value="UniProtKB"/>
</dbReference>
<dbReference type="GO" id="GO:0006281">
    <property type="term" value="P:DNA repair"/>
    <property type="evidence" value="ECO:0000318"/>
    <property type="project" value="GO_Central"/>
</dbReference>
<dbReference type="GO" id="GO:0006139">
    <property type="term" value="P:nucleobase-containing compound metabolic process"/>
    <property type="evidence" value="ECO:0000303"/>
    <property type="project" value="ComplexPortal"/>
</dbReference>
<dbReference type="GO" id="GO:2000779">
    <property type="term" value="P:regulation of double-strand break repair"/>
    <property type="evidence" value="ECO:0000303"/>
    <property type="project" value="ComplexPortal"/>
</dbReference>
<dbReference type="InterPro" id="IPR033349">
    <property type="entry name" value="ATRIP"/>
</dbReference>
<dbReference type="PANTHER" id="PTHR28594">
    <property type="entry name" value="ATR-INTERACTING PROTEIN"/>
    <property type="match status" value="1"/>
</dbReference>
<dbReference type="PANTHER" id="PTHR28594:SF1">
    <property type="entry name" value="ATR-INTERACTING PROTEIN"/>
    <property type="match status" value="1"/>
</dbReference>
<accession>Q8WXE1</accession>
<accession>A8K6A3</accession>
<accession>A8K714</accession>
<accession>B2RCE7</accession>
<accession>B4DU92</accession>
<accession>B5MEB7</accession>
<accession>Q69YK9</accession>
<accession>Q8NHQ2</accession>
<accession>Q8WUG7</accession>
<accession>Q96CL3</accession>
<accession>Q9HA30</accession>